<organism>
    <name type="scientific">Clostridium perfringens (strain 13 / Type A)</name>
    <dbReference type="NCBI Taxonomy" id="195102"/>
    <lineage>
        <taxon>Bacteria</taxon>
        <taxon>Bacillati</taxon>
        <taxon>Bacillota</taxon>
        <taxon>Clostridia</taxon>
        <taxon>Eubacteriales</taxon>
        <taxon>Clostridiaceae</taxon>
        <taxon>Clostridium</taxon>
    </lineage>
</organism>
<protein>
    <recommendedName>
        <fullName evidence="1">3-dehydroquinate synthase</fullName>
        <shortName evidence="1">DHQS</shortName>
        <ecNumber evidence="1">4.2.3.4</ecNumber>
    </recommendedName>
</protein>
<comment type="function">
    <text evidence="1">Catalyzes the conversion of 3-deoxy-D-arabino-heptulosonate 7-phosphate (DAHP) to dehydroquinate (DHQ).</text>
</comment>
<comment type="catalytic activity">
    <reaction evidence="1">
        <text>7-phospho-2-dehydro-3-deoxy-D-arabino-heptonate = 3-dehydroquinate + phosphate</text>
        <dbReference type="Rhea" id="RHEA:21968"/>
        <dbReference type="ChEBI" id="CHEBI:32364"/>
        <dbReference type="ChEBI" id="CHEBI:43474"/>
        <dbReference type="ChEBI" id="CHEBI:58394"/>
        <dbReference type="EC" id="4.2.3.4"/>
    </reaction>
</comment>
<comment type="cofactor">
    <cofactor evidence="1">
        <name>NAD(+)</name>
        <dbReference type="ChEBI" id="CHEBI:57540"/>
    </cofactor>
</comment>
<comment type="cofactor">
    <cofactor evidence="1">
        <name>Co(2+)</name>
        <dbReference type="ChEBI" id="CHEBI:48828"/>
    </cofactor>
    <cofactor evidence="1">
        <name>Zn(2+)</name>
        <dbReference type="ChEBI" id="CHEBI:29105"/>
    </cofactor>
    <text evidence="1">Binds 1 divalent metal cation per subunit. Can use either Co(2+) or Zn(2+).</text>
</comment>
<comment type="pathway">
    <text evidence="1">Metabolic intermediate biosynthesis; chorismate biosynthesis; chorismate from D-erythrose 4-phosphate and phosphoenolpyruvate: step 2/7.</text>
</comment>
<comment type="subcellular location">
    <subcellularLocation>
        <location evidence="1">Cytoplasm</location>
    </subcellularLocation>
</comment>
<comment type="similarity">
    <text evidence="1">Belongs to the sugar phosphate cyclases superfamily. Dehydroquinate synthase family.</text>
</comment>
<reference key="1">
    <citation type="journal article" date="2002" name="Proc. Natl. Acad. Sci. U.S.A.">
        <title>Complete genome sequence of Clostridium perfringens, an anaerobic flesh-eater.</title>
        <authorList>
            <person name="Shimizu T."/>
            <person name="Ohtani K."/>
            <person name="Hirakawa H."/>
            <person name="Ohshima K."/>
            <person name="Yamashita A."/>
            <person name="Shiba T."/>
            <person name="Ogasawara N."/>
            <person name="Hattori M."/>
            <person name="Kuhara S."/>
            <person name="Hayashi H."/>
        </authorList>
    </citation>
    <scope>NUCLEOTIDE SEQUENCE [LARGE SCALE GENOMIC DNA]</scope>
    <source>
        <strain>13 / Type A</strain>
    </source>
</reference>
<accession>Q8XMJ3</accession>
<feature type="chain" id="PRO_0000140731" description="3-dehydroquinate synthase">
    <location>
        <begin position="1"/>
        <end position="350"/>
    </location>
</feature>
<feature type="binding site" evidence="1">
    <location>
        <begin position="106"/>
        <end position="110"/>
    </location>
    <ligand>
        <name>NAD(+)</name>
        <dbReference type="ChEBI" id="CHEBI:57540"/>
    </ligand>
</feature>
<feature type="binding site" evidence="1">
    <location>
        <begin position="130"/>
        <end position="131"/>
    </location>
    <ligand>
        <name>NAD(+)</name>
        <dbReference type="ChEBI" id="CHEBI:57540"/>
    </ligand>
</feature>
<feature type="binding site" evidence="1">
    <location>
        <position position="143"/>
    </location>
    <ligand>
        <name>NAD(+)</name>
        <dbReference type="ChEBI" id="CHEBI:57540"/>
    </ligand>
</feature>
<feature type="binding site" evidence="1">
    <location>
        <position position="152"/>
    </location>
    <ligand>
        <name>NAD(+)</name>
        <dbReference type="ChEBI" id="CHEBI:57540"/>
    </ligand>
</feature>
<feature type="binding site" evidence="1">
    <location>
        <position position="185"/>
    </location>
    <ligand>
        <name>Zn(2+)</name>
        <dbReference type="ChEBI" id="CHEBI:29105"/>
    </ligand>
</feature>
<feature type="binding site" evidence="1">
    <location>
        <position position="246"/>
    </location>
    <ligand>
        <name>Zn(2+)</name>
        <dbReference type="ChEBI" id="CHEBI:29105"/>
    </ligand>
</feature>
<feature type="binding site" evidence="1">
    <location>
        <position position="263"/>
    </location>
    <ligand>
        <name>Zn(2+)</name>
        <dbReference type="ChEBI" id="CHEBI:29105"/>
    </ligand>
</feature>
<sequence length="350" mass="39121">MKVLRVNLDEKSYDIVIQKDLKDYFGEYIKTVFDGKKVAIITDDNLNDIYGEAIKKNIENEGFEVEVISVTPGEKSKSFSVLPGIYNKLLDFKLTRSDLIIALGGGVVGDLAGFVASTFLRGISFIQIPTSLLAQVDSSVGGKVAVDLERGKNLVGSFYHPELVLIDPNMLGTLPEKYFNDGLGEVIKYGCIKSKELFEKLEGFENKEDLKENIGEIIYECCNIKREVVENDEKDLGERMVLNFGHTLGHAIEQIYNYEIYSHGEAVAIGMNMISKIAEEKDLTKKGTAERIESLLKKYGLNTDVNIEDNGLAREAIKLDKKNLNGNLNVILLKDIGEGYIYNTTVEFFE</sequence>
<gene>
    <name evidence="1" type="primary">aroB</name>
    <name type="ordered locus">CPE0695</name>
</gene>
<dbReference type="EC" id="4.2.3.4" evidence="1"/>
<dbReference type="EMBL" id="BA000016">
    <property type="protein sequence ID" value="BAB80401.1"/>
    <property type="molecule type" value="Genomic_DNA"/>
</dbReference>
<dbReference type="RefSeq" id="WP_011009977.1">
    <property type="nucleotide sequence ID" value="NC_003366.1"/>
</dbReference>
<dbReference type="SMR" id="Q8XMJ3"/>
<dbReference type="STRING" id="195102.gene:10489957"/>
<dbReference type="KEGG" id="cpe:CPE0695"/>
<dbReference type="HOGENOM" id="CLU_001201_0_1_9"/>
<dbReference type="UniPathway" id="UPA00053">
    <property type="reaction ID" value="UER00085"/>
</dbReference>
<dbReference type="Proteomes" id="UP000000818">
    <property type="component" value="Chromosome"/>
</dbReference>
<dbReference type="GO" id="GO:0005737">
    <property type="term" value="C:cytoplasm"/>
    <property type="evidence" value="ECO:0007669"/>
    <property type="project" value="UniProtKB-SubCell"/>
</dbReference>
<dbReference type="GO" id="GO:0003856">
    <property type="term" value="F:3-dehydroquinate synthase activity"/>
    <property type="evidence" value="ECO:0007669"/>
    <property type="project" value="UniProtKB-UniRule"/>
</dbReference>
<dbReference type="GO" id="GO:0046872">
    <property type="term" value="F:metal ion binding"/>
    <property type="evidence" value="ECO:0007669"/>
    <property type="project" value="UniProtKB-KW"/>
</dbReference>
<dbReference type="GO" id="GO:0000166">
    <property type="term" value="F:nucleotide binding"/>
    <property type="evidence" value="ECO:0007669"/>
    <property type="project" value="UniProtKB-KW"/>
</dbReference>
<dbReference type="GO" id="GO:0008652">
    <property type="term" value="P:amino acid biosynthetic process"/>
    <property type="evidence" value="ECO:0007669"/>
    <property type="project" value="UniProtKB-KW"/>
</dbReference>
<dbReference type="GO" id="GO:0009073">
    <property type="term" value="P:aromatic amino acid family biosynthetic process"/>
    <property type="evidence" value="ECO:0007669"/>
    <property type="project" value="UniProtKB-KW"/>
</dbReference>
<dbReference type="GO" id="GO:0009423">
    <property type="term" value="P:chorismate biosynthetic process"/>
    <property type="evidence" value="ECO:0007669"/>
    <property type="project" value="UniProtKB-UniRule"/>
</dbReference>
<dbReference type="CDD" id="cd08195">
    <property type="entry name" value="DHQS"/>
    <property type="match status" value="1"/>
</dbReference>
<dbReference type="FunFam" id="3.40.50.1970:FF:000007">
    <property type="entry name" value="Pentafunctional AROM polypeptide"/>
    <property type="match status" value="1"/>
</dbReference>
<dbReference type="Gene3D" id="3.40.50.1970">
    <property type="match status" value="1"/>
</dbReference>
<dbReference type="Gene3D" id="1.20.1090.10">
    <property type="entry name" value="Dehydroquinate synthase-like - alpha domain"/>
    <property type="match status" value="1"/>
</dbReference>
<dbReference type="HAMAP" id="MF_00110">
    <property type="entry name" value="DHQ_synthase"/>
    <property type="match status" value="1"/>
</dbReference>
<dbReference type="InterPro" id="IPR050071">
    <property type="entry name" value="Dehydroquinate_synthase"/>
</dbReference>
<dbReference type="InterPro" id="IPR016037">
    <property type="entry name" value="DHQ_synth_AroB"/>
</dbReference>
<dbReference type="InterPro" id="IPR030963">
    <property type="entry name" value="DHQ_synth_fam"/>
</dbReference>
<dbReference type="InterPro" id="IPR030960">
    <property type="entry name" value="DHQS/DOIS_N"/>
</dbReference>
<dbReference type="InterPro" id="IPR056179">
    <property type="entry name" value="DHQS_C"/>
</dbReference>
<dbReference type="NCBIfam" id="TIGR01357">
    <property type="entry name" value="aroB"/>
    <property type="match status" value="1"/>
</dbReference>
<dbReference type="PANTHER" id="PTHR43622">
    <property type="entry name" value="3-DEHYDROQUINATE SYNTHASE"/>
    <property type="match status" value="1"/>
</dbReference>
<dbReference type="PANTHER" id="PTHR43622:SF7">
    <property type="entry name" value="3-DEHYDROQUINATE SYNTHASE, CHLOROPLASTIC"/>
    <property type="match status" value="1"/>
</dbReference>
<dbReference type="Pfam" id="PF01761">
    <property type="entry name" value="DHQ_synthase"/>
    <property type="match status" value="1"/>
</dbReference>
<dbReference type="Pfam" id="PF24621">
    <property type="entry name" value="DHQS_C"/>
    <property type="match status" value="1"/>
</dbReference>
<dbReference type="PIRSF" id="PIRSF001455">
    <property type="entry name" value="DHQ_synth"/>
    <property type="match status" value="1"/>
</dbReference>
<dbReference type="SUPFAM" id="SSF56796">
    <property type="entry name" value="Dehydroquinate synthase-like"/>
    <property type="match status" value="1"/>
</dbReference>
<keyword id="KW-0028">Amino-acid biosynthesis</keyword>
<keyword id="KW-0057">Aromatic amino acid biosynthesis</keyword>
<keyword id="KW-0170">Cobalt</keyword>
<keyword id="KW-0963">Cytoplasm</keyword>
<keyword id="KW-0456">Lyase</keyword>
<keyword id="KW-0479">Metal-binding</keyword>
<keyword id="KW-0520">NAD</keyword>
<keyword id="KW-0547">Nucleotide-binding</keyword>
<keyword id="KW-1185">Reference proteome</keyword>
<keyword id="KW-0862">Zinc</keyword>
<evidence type="ECO:0000255" key="1">
    <source>
        <dbReference type="HAMAP-Rule" id="MF_00110"/>
    </source>
</evidence>
<proteinExistence type="inferred from homology"/>
<name>AROB_CLOPE</name>